<feature type="chain" id="PRO_1000212593" description="Protein nucleotidyltransferase YdiU">
    <location>
        <begin position="1"/>
        <end position="478"/>
    </location>
</feature>
<feature type="active site" description="Proton acceptor" evidence="1">
    <location>
        <position position="245"/>
    </location>
</feature>
<feature type="binding site" evidence="1">
    <location>
        <position position="83"/>
    </location>
    <ligand>
        <name>ATP</name>
        <dbReference type="ChEBI" id="CHEBI:30616"/>
    </ligand>
</feature>
<feature type="binding site" evidence="1">
    <location>
        <position position="85"/>
    </location>
    <ligand>
        <name>ATP</name>
        <dbReference type="ChEBI" id="CHEBI:30616"/>
    </ligand>
</feature>
<feature type="binding site" evidence="1">
    <location>
        <position position="86"/>
    </location>
    <ligand>
        <name>ATP</name>
        <dbReference type="ChEBI" id="CHEBI:30616"/>
    </ligand>
</feature>
<feature type="binding site" evidence="1">
    <location>
        <position position="106"/>
    </location>
    <ligand>
        <name>ATP</name>
        <dbReference type="ChEBI" id="CHEBI:30616"/>
    </ligand>
</feature>
<feature type="binding site" evidence="1">
    <location>
        <position position="118"/>
    </location>
    <ligand>
        <name>ATP</name>
        <dbReference type="ChEBI" id="CHEBI:30616"/>
    </ligand>
</feature>
<feature type="binding site" evidence="1">
    <location>
        <position position="119"/>
    </location>
    <ligand>
        <name>ATP</name>
        <dbReference type="ChEBI" id="CHEBI:30616"/>
    </ligand>
</feature>
<feature type="binding site" evidence="1">
    <location>
        <position position="169"/>
    </location>
    <ligand>
        <name>ATP</name>
        <dbReference type="ChEBI" id="CHEBI:30616"/>
    </ligand>
</feature>
<feature type="binding site" evidence="1">
    <location>
        <position position="176"/>
    </location>
    <ligand>
        <name>ATP</name>
        <dbReference type="ChEBI" id="CHEBI:30616"/>
    </ligand>
</feature>
<feature type="binding site" evidence="1">
    <location>
        <position position="246"/>
    </location>
    <ligand>
        <name>Mg(2+)</name>
        <dbReference type="ChEBI" id="CHEBI:18420"/>
    </ligand>
</feature>
<feature type="binding site" evidence="1">
    <location>
        <position position="255"/>
    </location>
    <ligand>
        <name>ATP</name>
        <dbReference type="ChEBI" id="CHEBI:30616"/>
    </ligand>
</feature>
<feature type="binding site" evidence="1">
    <location>
        <position position="255"/>
    </location>
    <ligand>
        <name>Mg(2+)</name>
        <dbReference type="ChEBI" id="CHEBI:18420"/>
    </ligand>
</feature>
<keyword id="KW-0067">ATP-binding</keyword>
<keyword id="KW-0460">Magnesium</keyword>
<keyword id="KW-0464">Manganese</keyword>
<keyword id="KW-0479">Metal-binding</keyword>
<keyword id="KW-0547">Nucleotide-binding</keyword>
<keyword id="KW-0548">Nucleotidyltransferase</keyword>
<keyword id="KW-0808">Transferase</keyword>
<protein>
    <recommendedName>
        <fullName evidence="1">Protein nucleotidyltransferase YdiU</fullName>
        <ecNumber evidence="1">2.7.7.-</ecNumber>
    </recommendedName>
    <alternativeName>
        <fullName evidence="1">Protein adenylyltransferase YdiU</fullName>
        <ecNumber evidence="1">2.7.7.108</ecNumber>
    </alternativeName>
    <alternativeName>
        <fullName evidence="1">Protein uridylyltransferase YdiU</fullName>
        <ecNumber evidence="1">2.7.7.-</ecNumber>
    </alternativeName>
</protein>
<reference key="1">
    <citation type="journal article" date="2011" name="J. Bacteriol.">
        <title>Complete genome sequence of the Thermophilic Bacterium Exiguobacterium sp. AT1b.</title>
        <authorList>
            <person name="Vishnivetskaya T.A."/>
            <person name="Lucas S."/>
            <person name="Copeland A."/>
            <person name="Lapidus A."/>
            <person name="Glavina del Rio T."/>
            <person name="Dalin E."/>
            <person name="Tice H."/>
            <person name="Bruce D.C."/>
            <person name="Goodwin L.A."/>
            <person name="Pitluck S."/>
            <person name="Saunders E."/>
            <person name="Brettin T."/>
            <person name="Detter C."/>
            <person name="Han C."/>
            <person name="Larimer F."/>
            <person name="Land M.L."/>
            <person name="Hauser L.J."/>
            <person name="Kyrpides N.C."/>
            <person name="Ovchinnikova G."/>
            <person name="Kathariou S."/>
            <person name="Ramaley R.F."/>
            <person name="Rodrigues D.F."/>
            <person name="Hendrix C."/>
            <person name="Richardson P."/>
            <person name="Tiedje J.M."/>
        </authorList>
    </citation>
    <scope>NUCLEOTIDE SEQUENCE [LARGE SCALE GENOMIC DNA]</scope>
    <source>
        <strain>ATCC BAA-1283 / AT1b</strain>
    </source>
</reference>
<proteinExistence type="inferred from homology"/>
<evidence type="ECO:0000255" key="1">
    <source>
        <dbReference type="HAMAP-Rule" id="MF_00692"/>
    </source>
</evidence>
<organism>
    <name type="scientific">Exiguobacterium sp. (strain ATCC BAA-1283 / AT1b)</name>
    <dbReference type="NCBI Taxonomy" id="360911"/>
    <lineage>
        <taxon>Bacteria</taxon>
        <taxon>Bacillati</taxon>
        <taxon>Bacillota</taxon>
        <taxon>Bacilli</taxon>
        <taxon>Bacillales</taxon>
        <taxon>Bacillales Family XII. Incertae Sedis</taxon>
        <taxon>Exiguobacterium</taxon>
    </lineage>
</organism>
<dbReference type="EC" id="2.7.7.-" evidence="1"/>
<dbReference type="EC" id="2.7.7.108" evidence="1"/>
<dbReference type="EMBL" id="CP001615">
    <property type="protein sequence ID" value="ACQ71567.1"/>
    <property type="molecule type" value="Genomic_DNA"/>
</dbReference>
<dbReference type="RefSeq" id="WP_015881126.1">
    <property type="nucleotide sequence ID" value="NC_012673.1"/>
</dbReference>
<dbReference type="SMR" id="C4L4K4"/>
<dbReference type="STRING" id="360911.EAT1b_2651"/>
<dbReference type="KEGG" id="eat:EAT1b_2651"/>
<dbReference type="eggNOG" id="COG0397">
    <property type="taxonomic scope" value="Bacteria"/>
</dbReference>
<dbReference type="HOGENOM" id="CLU_010245_4_1_9"/>
<dbReference type="OrthoDB" id="9773505at2"/>
<dbReference type="Proteomes" id="UP000000716">
    <property type="component" value="Chromosome"/>
</dbReference>
<dbReference type="GO" id="GO:0070733">
    <property type="term" value="F:AMPylase activity"/>
    <property type="evidence" value="ECO:0007669"/>
    <property type="project" value="RHEA"/>
</dbReference>
<dbReference type="GO" id="GO:0005524">
    <property type="term" value="F:ATP binding"/>
    <property type="evidence" value="ECO:0007669"/>
    <property type="project" value="UniProtKB-UniRule"/>
</dbReference>
<dbReference type="GO" id="GO:0000287">
    <property type="term" value="F:magnesium ion binding"/>
    <property type="evidence" value="ECO:0007669"/>
    <property type="project" value="UniProtKB-UniRule"/>
</dbReference>
<dbReference type="HAMAP" id="MF_00692">
    <property type="entry name" value="YdiU_SelO"/>
    <property type="match status" value="1"/>
</dbReference>
<dbReference type="InterPro" id="IPR003846">
    <property type="entry name" value="SelO"/>
</dbReference>
<dbReference type="NCBIfam" id="NF000658">
    <property type="entry name" value="PRK00029.1"/>
    <property type="match status" value="1"/>
</dbReference>
<dbReference type="PANTHER" id="PTHR32057">
    <property type="entry name" value="PROTEIN ADENYLYLTRANSFERASE SELO, MITOCHONDRIAL"/>
    <property type="match status" value="1"/>
</dbReference>
<dbReference type="PANTHER" id="PTHR32057:SF14">
    <property type="entry name" value="PROTEIN ADENYLYLTRANSFERASE SELO, MITOCHONDRIAL"/>
    <property type="match status" value="1"/>
</dbReference>
<dbReference type="Pfam" id="PF02696">
    <property type="entry name" value="SelO"/>
    <property type="match status" value="1"/>
</dbReference>
<accession>C4L4K4</accession>
<gene>
    <name evidence="1" type="primary">ydiU</name>
    <name evidence="1" type="synonym">selO</name>
    <name type="ordered locus">EAT1b_2651</name>
</gene>
<comment type="function">
    <text evidence="1">Nucleotidyltransferase involved in the post-translational modification of proteins. It can catalyze the addition of adenosine monophosphate (AMP) or uridine monophosphate (UMP) to a protein, resulting in modifications known as AMPylation and UMPylation.</text>
</comment>
<comment type="catalytic activity">
    <reaction evidence="1">
        <text>L-seryl-[protein] + ATP = 3-O-(5'-adenylyl)-L-seryl-[protein] + diphosphate</text>
        <dbReference type="Rhea" id="RHEA:58120"/>
        <dbReference type="Rhea" id="RHEA-COMP:9863"/>
        <dbReference type="Rhea" id="RHEA-COMP:15073"/>
        <dbReference type="ChEBI" id="CHEBI:29999"/>
        <dbReference type="ChEBI" id="CHEBI:30616"/>
        <dbReference type="ChEBI" id="CHEBI:33019"/>
        <dbReference type="ChEBI" id="CHEBI:142516"/>
        <dbReference type="EC" id="2.7.7.108"/>
    </reaction>
</comment>
<comment type="catalytic activity">
    <reaction evidence="1">
        <text>L-threonyl-[protein] + ATP = 3-O-(5'-adenylyl)-L-threonyl-[protein] + diphosphate</text>
        <dbReference type="Rhea" id="RHEA:54292"/>
        <dbReference type="Rhea" id="RHEA-COMP:11060"/>
        <dbReference type="Rhea" id="RHEA-COMP:13847"/>
        <dbReference type="ChEBI" id="CHEBI:30013"/>
        <dbReference type="ChEBI" id="CHEBI:30616"/>
        <dbReference type="ChEBI" id="CHEBI:33019"/>
        <dbReference type="ChEBI" id="CHEBI:138113"/>
        <dbReference type="EC" id="2.7.7.108"/>
    </reaction>
</comment>
<comment type="catalytic activity">
    <reaction evidence="1">
        <text>L-tyrosyl-[protein] + ATP = O-(5'-adenylyl)-L-tyrosyl-[protein] + diphosphate</text>
        <dbReference type="Rhea" id="RHEA:54288"/>
        <dbReference type="Rhea" id="RHEA-COMP:10136"/>
        <dbReference type="Rhea" id="RHEA-COMP:13846"/>
        <dbReference type="ChEBI" id="CHEBI:30616"/>
        <dbReference type="ChEBI" id="CHEBI:33019"/>
        <dbReference type="ChEBI" id="CHEBI:46858"/>
        <dbReference type="ChEBI" id="CHEBI:83624"/>
        <dbReference type="EC" id="2.7.7.108"/>
    </reaction>
</comment>
<comment type="catalytic activity">
    <reaction evidence="1">
        <text>L-histidyl-[protein] + UTP = N(tele)-(5'-uridylyl)-L-histidyl-[protein] + diphosphate</text>
        <dbReference type="Rhea" id="RHEA:83891"/>
        <dbReference type="Rhea" id="RHEA-COMP:9745"/>
        <dbReference type="Rhea" id="RHEA-COMP:20239"/>
        <dbReference type="ChEBI" id="CHEBI:29979"/>
        <dbReference type="ChEBI" id="CHEBI:33019"/>
        <dbReference type="ChEBI" id="CHEBI:46398"/>
        <dbReference type="ChEBI" id="CHEBI:233474"/>
    </reaction>
</comment>
<comment type="catalytic activity">
    <reaction evidence="1">
        <text>L-seryl-[protein] + UTP = O-(5'-uridylyl)-L-seryl-[protein] + diphosphate</text>
        <dbReference type="Rhea" id="RHEA:64604"/>
        <dbReference type="Rhea" id="RHEA-COMP:9863"/>
        <dbReference type="Rhea" id="RHEA-COMP:16635"/>
        <dbReference type="ChEBI" id="CHEBI:29999"/>
        <dbReference type="ChEBI" id="CHEBI:33019"/>
        <dbReference type="ChEBI" id="CHEBI:46398"/>
        <dbReference type="ChEBI" id="CHEBI:156051"/>
    </reaction>
</comment>
<comment type="catalytic activity">
    <reaction evidence="1">
        <text>L-tyrosyl-[protein] + UTP = O-(5'-uridylyl)-L-tyrosyl-[protein] + diphosphate</text>
        <dbReference type="Rhea" id="RHEA:83887"/>
        <dbReference type="Rhea" id="RHEA-COMP:10136"/>
        <dbReference type="Rhea" id="RHEA-COMP:20238"/>
        <dbReference type="ChEBI" id="CHEBI:33019"/>
        <dbReference type="ChEBI" id="CHEBI:46398"/>
        <dbReference type="ChEBI" id="CHEBI:46858"/>
        <dbReference type="ChEBI" id="CHEBI:90602"/>
    </reaction>
</comment>
<comment type="cofactor">
    <cofactor evidence="1">
        <name>Mg(2+)</name>
        <dbReference type="ChEBI" id="CHEBI:18420"/>
    </cofactor>
    <cofactor evidence="1">
        <name>Mn(2+)</name>
        <dbReference type="ChEBI" id="CHEBI:29035"/>
    </cofactor>
</comment>
<comment type="similarity">
    <text evidence="1">Belongs to the SELO family.</text>
</comment>
<name>SELO_EXISA</name>
<sequence>MTTDWNFEATYLELRDIFYDRGPIHPVDNPTLVLFNDALAASLGLDAQSLKQDIDLLAGNRQTETSFSQAYAGHQFGNLTMLGDGRALMLGEHVTPNGKRVDVQLKGSGPTEYSRGGDGRAALGPMVREFIISEAMHALGIPTNRALAVIQTGEAIMRQGPKHGAILTRVASSHLRVGTFQFAAGAGSIDDVIALTEVAIKRHDPDLIDAPNRYEQFLGRVVERQARLIANWQLVGFIHGVMNTDNMFISGEGLDYGPCAFMDTYHPETVFSSIDREGRYAYANQPYIGSWNLARLAETLLPLLGETKEEAVDVANKQLTRYTELYKEAYFTGLAHKIGLFVRKDGDDELTDELLRLMMETEADYTNTFRSLTLGEIESLPFATRKDGKVWLGAWRKRLNGQGLPDEDVSRIMRQYNPAVIPRNHHVEKAIQAAERGDFGPTEAILTILRDPYNYDQSSEYVSAGPPRTYPYQTFCGT</sequence>